<accession>P49801</accession>
<proteinExistence type="evidence at transcript level"/>
<reference key="1">
    <citation type="journal article" date="1996" name="Cell">
        <title>EGL-10 regulates G protein signaling in the C. elegans nervous system and shares a conserved domain with many mammalian proteins.</title>
        <authorList>
            <person name="Koelle M.R."/>
            <person name="Horvitz H.R."/>
        </authorList>
    </citation>
    <scope>NUCLEOTIDE SEQUENCE [MRNA]</scope>
    <source>
        <tissue>Brain</tissue>
    </source>
</reference>
<sequence length="66" mass="7530">LAVQDLKKQPLQDVAKRVEEIWQEFLAPGAPSAINLDSHSYEITSQNVKDGGRYTFEDAQEHIYKL</sequence>
<dbReference type="EMBL" id="U32436">
    <property type="protein sequence ID" value="AAC52373.1"/>
    <property type="molecule type" value="mRNA"/>
</dbReference>
<dbReference type="SMR" id="P49801"/>
<dbReference type="FunCoup" id="P49801">
    <property type="interactions" value="16"/>
</dbReference>
<dbReference type="PhosphoSitePlus" id="P49801"/>
<dbReference type="PaxDb" id="10116-ENSRNOP00000054984"/>
<dbReference type="UCSC" id="RGD:3569">
    <property type="organism name" value="rat"/>
</dbReference>
<dbReference type="AGR" id="RGD:3569"/>
<dbReference type="RGD" id="3569">
    <property type="gene designation" value="Rgs6"/>
</dbReference>
<dbReference type="eggNOG" id="KOG3589">
    <property type="taxonomic scope" value="Eukaryota"/>
</dbReference>
<dbReference type="InParanoid" id="P49801"/>
<dbReference type="PhylomeDB" id="P49801"/>
<dbReference type="Proteomes" id="UP000002494">
    <property type="component" value="Unplaced"/>
</dbReference>
<dbReference type="GO" id="GO:0005829">
    <property type="term" value="C:cytosol"/>
    <property type="evidence" value="ECO:0000250"/>
    <property type="project" value="UniProtKB"/>
</dbReference>
<dbReference type="GO" id="GO:0016020">
    <property type="term" value="C:membrane"/>
    <property type="evidence" value="ECO:0000250"/>
    <property type="project" value="UniProtKB"/>
</dbReference>
<dbReference type="GO" id="GO:0005634">
    <property type="term" value="C:nucleus"/>
    <property type="evidence" value="ECO:0007669"/>
    <property type="project" value="UniProtKB-SubCell"/>
</dbReference>
<dbReference type="GO" id="GO:0005886">
    <property type="term" value="C:plasma membrane"/>
    <property type="evidence" value="ECO:0007669"/>
    <property type="project" value="UniProtKB-SubCell"/>
</dbReference>
<dbReference type="GO" id="GO:0032991">
    <property type="term" value="C:protein-containing complex"/>
    <property type="evidence" value="ECO:0000314"/>
    <property type="project" value="RGD"/>
</dbReference>
<dbReference type="GO" id="GO:0005096">
    <property type="term" value="F:GTPase activator activity"/>
    <property type="evidence" value="ECO:0000250"/>
    <property type="project" value="UniProtKB"/>
</dbReference>
<dbReference type="GO" id="GO:0019904">
    <property type="term" value="F:protein domain specific binding"/>
    <property type="evidence" value="ECO:0000353"/>
    <property type="project" value="RGD"/>
</dbReference>
<dbReference type="GO" id="GO:0009968">
    <property type="term" value="P:negative regulation of signal transduction"/>
    <property type="evidence" value="ECO:0007669"/>
    <property type="project" value="UniProtKB-KW"/>
</dbReference>
<dbReference type="GO" id="GO:0043547">
    <property type="term" value="P:positive regulation of GTPase activity"/>
    <property type="evidence" value="ECO:0000250"/>
    <property type="project" value="UniProtKB"/>
</dbReference>
<dbReference type="GO" id="GO:0045666">
    <property type="term" value="P:positive regulation of neuron differentiation"/>
    <property type="evidence" value="ECO:0000314"/>
    <property type="project" value="RGD"/>
</dbReference>
<dbReference type="GO" id="GO:0008277">
    <property type="term" value="P:regulation of G protein-coupled receptor signaling pathway"/>
    <property type="evidence" value="ECO:0007669"/>
    <property type="project" value="InterPro"/>
</dbReference>
<dbReference type="FunFam" id="1.10.167.10:FF:000001">
    <property type="entry name" value="Putative regulator of g-protein signaling 12"/>
    <property type="match status" value="1"/>
</dbReference>
<dbReference type="Gene3D" id="1.10.167.10">
    <property type="entry name" value="Regulator of G-protein Signalling 4, domain 2"/>
    <property type="match status" value="1"/>
</dbReference>
<dbReference type="InterPro" id="IPR016137">
    <property type="entry name" value="RGS"/>
</dbReference>
<dbReference type="InterPro" id="IPR047016">
    <property type="entry name" value="RGS6/7/9/11"/>
</dbReference>
<dbReference type="InterPro" id="IPR036305">
    <property type="entry name" value="RGS_sf"/>
</dbReference>
<dbReference type="InterPro" id="IPR044926">
    <property type="entry name" value="RGS_subdomain_2"/>
</dbReference>
<dbReference type="PANTHER" id="PTHR45746">
    <property type="entry name" value="LP21163P"/>
    <property type="match status" value="1"/>
</dbReference>
<dbReference type="PANTHER" id="PTHR45746:SF2">
    <property type="entry name" value="REGULATOR OF G-PROTEIN SIGNALING 6"/>
    <property type="match status" value="1"/>
</dbReference>
<dbReference type="Pfam" id="PF00615">
    <property type="entry name" value="RGS"/>
    <property type="match status" value="1"/>
</dbReference>
<dbReference type="PRINTS" id="PR01301">
    <property type="entry name" value="RGSPROTEIN"/>
</dbReference>
<dbReference type="SUPFAM" id="SSF48097">
    <property type="entry name" value="Regulator of G-protein signaling, RGS"/>
    <property type="match status" value="1"/>
</dbReference>
<dbReference type="PROSITE" id="PS50132">
    <property type="entry name" value="RGS"/>
    <property type="match status" value="1"/>
</dbReference>
<feature type="chain" id="PRO_0000204194" description="Regulator of G-protein signaling 6">
    <location>
        <begin position="1" status="less than"/>
        <end position="66" status="greater than"/>
    </location>
</feature>
<feature type="domain" description="RGS" evidence="4">
    <location>
        <begin position="1" status="less than"/>
        <end position="66" status="greater than"/>
    </location>
</feature>
<feature type="non-terminal residue">
    <location>
        <position position="1"/>
    </location>
</feature>
<feature type="non-terminal residue">
    <location>
        <position position="66"/>
    </location>
</feature>
<keyword id="KW-1003">Cell membrane</keyword>
<keyword id="KW-0963">Cytoplasm</keyword>
<keyword id="KW-0472">Membrane</keyword>
<keyword id="KW-0539">Nucleus</keyword>
<keyword id="KW-1185">Reference proteome</keyword>
<keyword id="KW-0734">Signal transduction inhibitor</keyword>
<evidence type="ECO:0000250" key="1"/>
<evidence type="ECO:0000250" key="2">
    <source>
        <dbReference type="UniProtKB" id="P49758"/>
    </source>
</evidence>
<evidence type="ECO:0000250" key="3">
    <source>
        <dbReference type="UniProtKB" id="Q9Z2H2"/>
    </source>
</evidence>
<evidence type="ECO:0000255" key="4">
    <source>
        <dbReference type="PROSITE-ProRule" id="PRU00171"/>
    </source>
</evidence>
<gene>
    <name type="primary">Rgs6</name>
</gene>
<comment type="function">
    <text evidence="2">Regulates G protein-coupled receptor signaling cascades. Inhibits signal transduction by increasing the GTPase activity of G protein alpha subunits, thereby driving them into their inactive GDP-bound form. The RGS6/GNB5 dimer enhances GNAO1 GTPase activity.</text>
</comment>
<comment type="subunit">
    <text evidence="2 3">Interacts with GNB5 (By similarity). Interacts with RGS7BP, leading to regulate the subcellular location of the heterodimer formed with GNB5 (By similarity). Interacts with GNAI1 (By similarity).</text>
</comment>
<comment type="subcellular location">
    <subcellularLocation>
        <location evidence="2">Cytoplasm</location>
    </subcellularLocation>
    <subcellularLocation>
        <location evidence="2">Cytoplasm</location>
        <location evidence="2">Cytosol</location>
    </subcellularLocation>
    <subcellularLocation>
        <location evidence="2">Membrane</location>
        <topology evidence="2">Peripheral membrane protein</topology>
    </subcellularLocation>
    <subcellularLocation>
        <location evidence="2">Nucleus</location>
    </subcellularLocation>
    <subcellularLocation>
        <location evidence="3">Cell membrane</location>
    </subcellularLocation>
    <text evidence="2">Interaction with GNB5 mediates translocation to the nucleus.</text>
</comment>
<comment type="domain">
    <text evidence="1">The RGS domain interacts avidly with Galpha and mediates the acceleration of Galpha-mediated GTP hydrolysis.</text>
</comment>
<name>RGS6_RAT</name>
<protein>
    <recommendedName>
        <fullName>Regulator of G-protein signaling 6</fullName>
        <shortName>RGS6</shortName>
    </recommendedName>
</protein>
<organism>
    <name type="scientific">Rattus norvegicus</name>
    <name type="common">Rat</name>
    <dbReference type="NCBI Taxonomy" id="10116"/>
    <lineage>
        <taxon>Eukaryota</taxon>
        <taxon>Metazoa</taxon>
        <taxon>Chordata</taxon>
        <taxon>Craniata</taxon>
        <taxon>Vertebrata</taxon>
        <taxon>Euteleostomi</taxon>
        <taxon>Mammalia</taxon>
        <taxon>Eutheria</taxon>
        <taxon>Euarchontoglires</taxon>
        <taxon>Glires</taxon>
        <taxon>Rodentia</taxon>
        <taxon>Myomorpha</taxon>
        <taxon>Muroidea</taxon>
        <taxon>Muridae</taxon>
        <taxon>Murinae</taxon>
        <taxon>Rattus</taxon>
    </lineage>
</organism>